<feature type="chain" id="PRO_1000058839" description="Adenylate kinase">
    <location>
        <begin position="1"/>
        <end position="219"/>
    </location>
</feature>
<feature type="region of interest" description="NMP" evidence="1">
    <location>
        <begin position="30"/>
        <end position="59"/>
    </location>
</feature>
<feature type="region of interest" description="LID" evidence="1">
    <location>
        <begin position="122"/>
        <end position="159"/>
    </location>
</feature>
<feature type="region of interest" description="Disordered" evidence="2">
    <location>
        <begin position="128"/>
        <end position="150"/>
    </location>
</feature>
<feature type="compositionally biased region" description="Basic and acidic residues" evidence="2">
    <location>
        <begin position="140"/>
        <end position="150"/>
    </location>
</feature>
<feature type="binding site" evidence="1">
    <location>
        <begin position="10"/>
        <end position="15"/>
    </location>
    <ligand>
        <name>ATP</name>
        <dbReference type="ChEBI" id="CHEBI:30616"/>
    </ligand>
</feature>
<feature type="binding site" evidence="1">
    <location>
        <position position="31"/>
    </location>
    <ligand>
        <name>AMP</name>
        <dbReference type="ChEBI" id="CHEBI:456215"/>
    </ligand>
</feature>
<feature type="binding site" evidence="1">
    <location>
        <position position="36"/>
    </location>
    <ligand>
        <name>AMP</name>
        <dbReference type="ChEBI" id="CHEBI:456215"/>
    </ligand>
</feature>
<feature type="binding site" evidence="1">
    <location>
        <begin position="57"/>
        <end position="59"/>
    </location>
    <ligand>
        <name>AMP</name>
        <dbReference type="ChEBI" id="CHEBI:456215"/>
    </ligand>
</feature>
<feature type="binding site" evidence="1">
    <location>
        <begin position="85"/>
        <end position="88"/>
    </location>
    <ligand>
        <name>AMP</name>
        <dbReference type="ChEBI" id="CHEBI:456215"/>
    </ligand>
</feature>
<feature type="binding site" evidence="1">
    <location>
        <position position="92"/>
    </location>
    <ligand>
        <name>AMP</name>
        <dbReference type="ChEBI" id="CHEBI:456215"/>
    </ligand>
</feature>
<feature type="binding site" evidence="1">
    <location>
        <position position="123"/>
    </location>
    <ligand>
        <name>ATP</name>
        <dbReference type="ChEBI" id="CHEBI:30616"/>
    </ligand>
</feature>
<feature type="binding site" evidence="1">
    <location>
        <begin position="132"/>
        <end position="133"/>
    </location>
    <ligand>
        <name>ATP</name>
        <dbReference type="ChEBI" id="CHEBI:30616"/>
    </ligand>
</feature>
<feature type="binding site" evidence="1">
    <location>
        <position position="156"/>
    </location>
    <ligand>
        <name>AMP</name>
        <dbReference type="ChEBI" id="CHEBI:456215"/>
    </ligand>
</feature>
<feature type="binding site" evidence="1">
    <location>
        <position position="167"/>
    </location>
    <ligand>
        <name>AMP</name>
        <dbReference type="ChEBI" id="CHEBI:456215"/>
    </ligand>
</feature>
<feature type="binding site" evidence="1">
    <location>
        <position position="203"/>
    </location>
    <ligand>
        <name>ATP</name>
        <dbReference type="ChEBI" id="CHEBI:30616"/>
    </ligand>
</feature>
<gene>
    <name evidence="1" type="primary">adk</name>
    <name type="ordered locus">Hhal_1784</name>
</gene>
<organism>
    <name type="scientific">Halorhodospira halophila (strain DSM 244 / SL1)</name>
    <name type="common">Ectothiorhodospira halophila (strain DSM 244 / SL1)</name>
    <dbReference type="NCBI Taxonomy" id="349124"/>
    <lineage>
        <taxon>Bacteria</taxon>
        <taxon>Pseudomonadati</taxon>
        <taxon>Pseudomonadota</taxon>
        <taxon>Gammaproteobacteria</taxon>
        <taxon>Chromatiales</taxon>
        <taxon>Ectothiorhodospiraceae</taxon>
        <taxon>Halorhodospira</taxon>
    </lineage>
</organism>
<name>KAD_HALHL</name>
<protein>
    <recommendedName>
        <fullName evidence="1">Adenylate kinase</fullName>
        <shortName evidence="1">AK</shortName>
        <ecNumber evidence="1">2.7.4.3</ecNumber>
    </recommendedName>
    <alternativeName>
        <fullName evidence="1">ATP-AMP transphosphorylase</fullName>
    </alternativeName>
    <alternativeName>
        <fullName evidence="1">ATP:AMP phosphotransferase</fullName>
    </alternativeName>
    <alternativeName>
        <fullName evidence="1">Adenylate monophosphate kinase</fullName>
    </alternativeName>
</protein>
<accession>A1WXY6</accession>
<reference key="1">
    <citation type="submission" date="2006-12" db="EMBL/GenBank/DDBJ databases">
        <title>Complete sequence of Halorhodospira halophila SL1.</title>
        <authorList>
            <consortium name="US DOE Joint Genome Institute"/>
            <person name="Copeland A."/>
            <person name="Lucas S."/>
            <person name="Lapidus A."/>
            <person name="Barry K."/>
            <person name="Detter J.C."/>
            <person name="Glavina del Rio T."/>
            <person name="Hammon N."/>
            <person name="Israni S."/>
            <person name="Dalin E."/>
            <person name="Tice H."/>
            <person name="Pitluck S."/>
            <person name="Saunders E."/>
            <person name="Brettin T."/>
            <person name="Bruce D."/>
            <person name="Han C."/>
            <person name="Tapia R."/>
            <person name="Schmutz J."/>
            <person name="Larimer F."/>
            <person name="Land M."/>
            <person name="Hauser L."/>
            <person name="Kyrpides N."/>
            <person name="Mikhailova N."/>
            <person name="Hoff W."/>
            <person name="Richardson P."/>
        </authorList>
    </citation>
    <scope>NUCLEOTIDE SEQUENCE [LARGE SCALE GENOMIC DNA]</scope>
    <source>
        <strain>DSM 244 / SL1</strain>
    </source>
</reference>
<dbReference type="EC" id="2.7.4.3" evidence="1"/>
<dbReference type="EMBL" id="CP000544">
    <property type="protein sequence ID" value="ABM62548.1"/>
    <property type="molecule type" value="Genomic_DNA"/>
</dbReference>
<dbReference type="RefSeq" id="WP_011814570.1">
    <property type="nucleotide sequence ID" value="NC_008789.1"/>
</dbReference>
<dbReference type="SMR" id="A1WXY6"/>
<dbReference type="STRING" id="349124.Hhal_1784"/>
<dbReference type="KEGG" id="hha:Hhal_1784"/>
<dbReference type="eggNOG" id="COG0563">
    <property type="taxonomic scope" value="Bacteria"/>
</dbReference>
<dbReference type="HOGENOM" id="CLU_032354_1_2_6"/>
<dbReference type="OrthoDB" id="9805030at2"/>
<dbReference type="UniPathway" id="UPA00588">
    <property type="reaction ID" value="UER00649"/>
</dbReference>
<dbReference type="Proteomes" id="UP000000647">
    <property type="component" value="Chromosome"/>
</dbReference>
<dbReference type="GO" id="GO:0005737">
    <property type="term" value="C:cytoplasm"/>
    <property type="evidence" value="ECO:0007669"/>
    <property type="project" value="UniProtKB-SubCell"/>
</dbReference>
<dbReference type="GO" id="GO:0004017">
    <property type="term" value="F:adenylate kinase activity"/>
    <property type="evidence" value="ECO:0007669"/>
    <property type="project" value="UniProtKB-UniRule"/>
</dbReference>
<dbReference type="GO" id="GO:0005524">
    <property type="term" value="F:ATP binding"/>
    <property type="evidence" value="ECO:0007669"/>
    <property type="project" value="UniProtKB-UniRule"/>
</dbReference>
<dbReference type="GO" id="GO:0044209">
    <property type="term" value="P:AMP salvage"/>
    <property type="evidence" value="ECO:0007669"/>
    <property type="project" value="UniProtKB-UniRule"/>
</dbReference>
<dbReference type="CDD" id="cd01428">
    <property type="entry name" value="ADK"/>
    <property type="match status" value="1"/>
</dbReference>
<dbReference type="FunFam" id="3.40.50.300:FF:000106">
    <property type="entry name" value="Adenylate kinase mitochondrial"/>
    <property type="match status" value="1"/>
</dbReference>
<dbReference type="Gene3D" id="3.40.50.300">
    <property type="entry name" value="P-loop containing nucleotide triphosphate hydrolases"/>
    <property type="match status" value="1"/>
</dbReference>
<dbReference type="HAMAP" id="MF_00235">
    <property type="entry name" value="Adenylate_kinase_Adk"/>
    <property type="match status" value="1"/>
</dbReference>
<dbReference type="InterPro" id="IPR006259">
    <property type="entry name" value="Adenyl_kin_sub"/>
</dbReference>
<dbReference type="InterPro" id="IPR000850">
    <property type="entry name" value="Adenylat/UMP-CMP_kin"/>
</dbReference>
<dbReference type="InterPro" id="IPR033690">
    <property type="entry name" value="Adenylat_kinase_CS"/>
</dbReference>
<dbReference type="InterPro" id="IPR007862">
    <property type="entry name" value="Adenylate_kinase_lid-dom"/>
</dbReference>
<dbReference type="InterPro" id="IPR027417">
    <property type="entry name" value="P-loop_NTPase"/>
</dbReference>
<dbReference type="NCBIfam" id="TIGR01351">
    <property type="entry name" value="adk"/>
    <property type="match status" value="1"/>
</dbReference>
<dbReference type="NCBIfam" id="NF001379">
    <property type="entry name" value="PRK00279.1-1"/>
    <property type="match status" value="1"/>
</dbReference>
<dbReference type="NCBIfam" id="NF001380">
    <property type="entry name" value="PRK00279.1-2"/>
    <property type="match status" value="1"/>
</dbReference>
<dbReference type="NCBIfam" id="NF001381">
    <property type="entry name" value="PRK00279.1-3"/>
    <property type="match status" value="1"/>
</dbReference>
<dbReference type="NCBIfam" id="NF011100">
    <property type="entry name" value="PRK14527.1"/>
    <property type="match status" value="1"/>
</dbReference>
<dbReference type="PANTHER" id="PTHR23359">
    <property type="entry name" value="NUCLEOTIDE KINASE"/>
    <property type="match status" value="1"/>
</dbReference>
<dbReference type="Pfam" id="PF00406">
    <property type="entry name" value="ADK"/>
    <property type="match status" value="1"/>
</dbReference>
<dbReference type="Pfam" id="PF05191">
    <property type="entry name" value="ADK_lid"/>
    <property type="match status" value="1"/>
</dbReference>
<dbReference type="PRINTS" id="PR00094">
    <property type="entry name" value="ADENYLTKNASE"/>
</dbReference>
<dbReference type="SUPFAM" id="SSF52540">
    <property type="entry name" value="P-loop containing nucleoside triphosphate hydrolases"/>
    <property type="match status" value="1"/>
</dbReference>
<dbReference type="PROSITE" id="PS00113">
    <property type="entry name" value="ADENYLATE_KINASE"/>
    <property type="match status" value="1"/>
</dbReference>
<sequence length="219" mass="23883">MRLILLGPPGAGKGTQAAHICEAFGIPQISTGDMLRAAVKAGTPLGQQAKKIMDEGGLVSDDIILGLIEERVAQADCANGFLFDGFPRTIAQADGLNDQGIRIDAVVEIQVPDEEIVDRMAGRRVHPGSGRVYHVTHNPPRQEGKDDVTGEDLVQREDDREETVRHRLGVYHEQTRPLVDYYSQWAQKGGADAPAYITVDGQRPVETVRDEILAALKAR</sequence>
<keyword id="KW-0067">ATP-binding</keyword>
<keyword id="KW-0963">Cytoplasm</keyword>
<keyword id="KW-0418">Kinase</keyword>
<keyword id="KW-0545">Nucleotide biosynthesis</keyword>
<keyword id="KW-0547">Nucleotide-binding</keyword>
<keyword id="KW-1185">Reference proteome</keyword>
<keyword id="KW-0808">Transferase</keyword>
<proteinExistence type="inferred from homology"/>
<evidence type="ECO:0000255" key="1">
    <source>
        <dbReference type="HAMAP-Rule" id="MF_00235"/>
    </source>
</evidence>
<evidence type="ECO:0000256" key="2">
    <source>
        <dbReference type="SAM" id="MobiDB-lite"/>
    </source>
</evidence>
<comment type="function">
    <text evidence="1">Catalyzes the reversible transfer of the terminal phosphate group between ATP and AMP. Plays an important role in cellular energy homeostasis and in adenine nucleotide metabolism.</text>
</comment>
<comment type="catalytic activity">
    <reaction evidence="1">
        <text>AMP + ATP = 2 ADP</text>
        <dbReference type="Rhea" id="RHEA:12973"/>
        <dbReference type="ChEBI" id="CHEBI:30616"/>
        <dbReference type="ChEBI" id="CHEBI:456215"/>
        <dbReference type="ChEBI" id="CHEBI:456216"/>
        <dbReference type="EC" id="2.7.4.3"/>
    </reaction>
</comment>
<comment type="pathway">
    <text evidence="1">Purine metabolism; AMP biosynthesis via salvage pathway; AMP from ADP: step 1/1.</text>
</comment>
<comment type="subunit">
    <text evidence="1">Monomer.</text>
</comment>
<comment type="subcellular location">
    <subcellularLocation>
        <location evidence="1">Cytoplasm</location>
    </subcellularLocation>
</comment>
<comment type="domain">
    <text evidence="1">Consists of three domains, a large central CORE domain and two small peripheral domains, NMPbind and LID, which undergo movements during catalysis. The LID domain closes over the site of phosphoryl transfer upon ATP binding. Assembling and dissambling the active center during each catalytic cycle provides an effective means to prevent ATP hydrolysis.</text>
</comment>
<comment type="similarity">
    <text evidence="1">Belongs to the adenylate kinase family.</text>
</comment>